<dbReference type="EMBL" id="CU329670">
    <property type="protein sequence ID" value="CAB83085.1"/>
    <property type="molecule type" value="Genomic_DNA"/>
</dbReference>
<dbReference type="EMBL" id="D89164">
    <property type="protein sequence ID" value="BAA13826.1"/>
    <property type="status" value="ALT_SEQ"/>
    <property type="molecule type" value="mRNA"/>
</dbReference>
<dbReference type="PIR" id="T42526">
    <property type="entry name" value="T42526"/>
</dbReference>
<dbReference type="SMR" id="Q9P7E8"/>
<dbReference type="BioGRID" id="279417">
    <property type="interactions" value="6"/>
</dbReference>
<dbReference type="FunCoup" id="Q9P7E8">
    <property type="interactions" value="126"/>
</dbReference>
<dbReference type="STRING" id="284812.Q9P7E8"/>
<dbReference type="iPTMnet" id="Q9P7E8"/>
<dbReference type="PaxDb" id="4896-SPAPJ760.02c.1"/>
<dbReference type="EnsemblFungi" id="SPAPJ760.02c.1">
    <property type="protein sequence ID" value="SPAPJ760.02c.1:pep"/>
    <property type="gene ID" value="SPAPJ760.02c"/>
</dbReference>
<dbReference type="KEGG" id="spo:2542979"/>
<dbReference type="PomBase" id="SPAPJ760.02c"/>
<dbReference type="VEuPathDB" id="FungiDB:SPAPJ760.02c"/>
<dbReference type="eggNOG" id="KOG3655">
    <property type="taxonomic scope" value="Eukaryota"/>
</dbReference>
<dbReference type="HOGENOM" id="CLU_013085_2_0_1"/>
<dbReference type="InParanoid" id="Q9P7E8"/>
<dbReference type="OMA" id="DANWTIF"/>
<dbReference type="PRO" id="PR:Q9P7E8"/>
<dbReference type="Proteomes" id="UP000002485">
    <property type="component" value="Chromosome I"/>
</dbReference>
<dbReference type="GO" id="GO:0099079">
    <property type="term" value="C:actin body"/>
    <property type="evidence" value="ECO:0000314"/>
    <property type="project" value="PomBase"/>
</dbReference>
<dbReference type="GO" id="GO:0030479">
    <property type="term" value="C:actin cortical patch"/>
    <property type="evidence" value="ECO:0000314"/>
    <property type="project" value="PomBase"/>
</dbReference>
<dbReference type="GO" id="GO:0032153">
    <property type="term" value="C:cell division site"/>
    <property type="evidence" value="ECO:0007005"/>
    <property type="project" value="PomBase"/>
</dbReference>
<dbReference type="GO" id="GO:0051286">
    <property type="term" value="C:cell tip"/>
    <property type="evidence" value="ECO:0007005"/>
    <property type="project" value="PomBase"/>
</dbReference>
<dbReference type="GO" id="GO:0030864">
    <property type="term" value="C:cortical actin cytoskeleton"/>
    <property type="evidence" value="ECO:0000318"/>
    <property type="project" value="GO_Central"/>
</dbReference>
<dbReference type="GO" id="GO:0030427">
    <property type="term" value="C:site of polarized growth"/>
    <property type="evidence" value="ECO:0000318"/>
    <property type="project" value="GO_Central"/>
</dbReference>
<dbReference type="GO" id="GO:0051015">
    <property type="term" value="F:actin filament binding"/>
    <property type="evidence" value="ECO:0000318"/>
    <property type="project" value="GO_Central"/>
</dbReference>
<dbReference type="GO" id="GO:0030833">
    <property type="term" value="P:regulation of actin filament polymerization"/>
    <property type="evidence" value="ECO:0000318"/>
    <property type="project" value="GO_Central"/>
</dbReference>
<dbReference type="CDD" id="cd11281">
    <property type="entry name" value="ADF_drebrin_like"/>
    <property type="match status" value="1"/>
</dbReference>
<dbReference type="CDD" id="cd11961">
    <property type="entry name" value="SH3_Abp1_fungi_C2"/>
    <property type="match status" value="1"/>
</dbReference>
<dbReference type="FunFam" id="2.30.30.40:FF:000483">
    <property type="entry name" value="Protein app1"/>
    <property type="match status" value="1"/>
</dbReference>
<dbReference type="FunFam" id="2.30.30.40:FF:000072">
    <property type="entry name" value="Unconventional Myosin IB"/>
    <property type="match status" value="1"/>
</dbReference>
<dbReference type="Gene3D" id="3.40.20.10">
    <property type="entry name" value="Severin"/>
    <property type="match status" value="1"/>
</dbReference>
<dbReference type="Gene3D" id="2.30.30.40">
    <property type="entry name" value="SH3 Domains"/>
    <property type="match status" value="2"/>
</dbReference>
<dbReference type="InterPro" id="IPR035718">
    <property type="entry name" value="Abp1_fungi_SH3_C2"/>
</dbReference>
<dbReference type="InterPro" id="IPR002108">
    <property type="entry name" value="ADF-H"/>
</dbReference>
<dbReference type="InterPro" id="IPR029006">
    <property type="entry name" value="ADF-H/Gelsolin-like_dom_sf"/>
</dbReference>
<dbReference type="InterPro" id="IPR036028">
    <property type="entry name" value="SH3-like_dom_sf"/>
</dbReference>
<dbReference type="InterPro" id="IPR001452">
    <property type="entry name" value="SH3_domain"/>
</dbReference>
<dbReference type="PANTHER" id="PTHR10829">
    <property type="entry name" value="CORTACTIN AND DREBRIN"/>
    <property type="match status" value="1"/>
</dbReference>
<dbReference type="PANTHER" id="PTHR10829:SF25">
    <property type="entry name" value="DREBRIN-LIKE PROTEIN"/>
    <property type="match status" value="1"/>
</dbReference>
<dbReference type="Pfam" id="PF00241">
    <property type="entry name" value="Cofilin_ADF"/>
    <property type="match status" value="1"/>
</dbReference>
<dbReference type="Pfam" id="PF00018">
    <property type="entry name" value="SH3_1"/>
    <property type="match status" value="1"/>
</dbReference>
<dbReference type="Pfam" id="PF14604">
    <property type="entry name" value="SH3_9"/>
    <property type="match status" value="1"/>
</dbReference>
<dbReference type="PRINTS" id="PR00499">
    <property type="entry name" value="P67PHOX"/>
</dbReference>
<dbReference type="PRINTS" id="PR00452">
    <property type="entry name" value="SH3DOMAIN"/>
</dbReference>
<dbReference type="SMART" id="SM00102">
    <property type="entry name" value="ADF"/>
    <property type="match status" value="1"/>
</dbReference>
<dbReference type="SMART" id="SM00326">
    <property type="entry name" value="SH3"/>
    <property type="match status" value="2"/>
</dbReference>
<dbReference type="SUPFAM" id="SSF55753">
    <property type="entry name" value="Actin depolymerizing proteins"/>
    <property type="match status" value="1"/>
</dbReference>
<dbReference type="SUPFAM" id="SSF50044">
    <property type="entry name" value="SH3-domain"/>
    <property type="match status" value="2"/>
</dbReference>
<dbReference type="PROSITE" id="PS51263">
    <property type="entry name" value="ADF_H"/>
    <property type="match status" value="1"/>
</dbReference>
<dbReference type="PROSITE" id="PS50002">
    <property type="entry name" value="SH3"/>
    <property type="match status" value="2"/>
</dbReference>
<feature type="chain" id="PRO_0000064640" description="Protein app1">
    <location>
        <begin position="1"/>
        <end position="857"/>
    </location>
</feature>
<feature type="domain" description="ADF-H" evidence="2">
    <location>
        <begin position="6"/>
        <end position="133"/>
    </location>
</feature>
<feature type="domain" description="SH3 1" evidence="1">
    <location>
        <begin position="725"/>
        <end position="785"/>
    </location>
</feature>
<feature type="domain" description="SH3 2" evidence="1">
    <location>
        <begin position="800"/>
        <end position="857"/>
    </location>
</feature>
<feature type="region of interest" description="Disordered" evidence="3">
    <location>
        <begin position="167"/>
        <end position="562"/>
    </location>
</feature>
<feature type="region of interest" description="Disordered" evidence="3">
    <location>
        <begin position="585"/>
        <end position="622"/>
    </location>
</feature>
<feature type="region of interest" description="Disordered" evidence="3">
    <location>
        <begin position="693"/>
        <end position="723"/>
    </location>
</feature>
<feature type="compositionally biased region" description="Basic and acidic residues" evidence="3">
    <location>
        <begin position="193"/>
        <end position="204"/>
    </location>
</feature>
<feature type="compositionally biased region" description="Low complexity" evidence="3">
    <location>
        <begin position="205"/>
        <end position="217"/>
    </location>
</feature>
<feature type="compositionally biased region" description="Basic and acidic residues" evidence="3">
    <location>
        <begin position="229"/>
        <end position="240"/>
    </location>
</feature>
<feature type="compositionally biased region" description="Polar residues" evidence="3">
    <location>
        <begin position="276"/>
        <end position="295"/>
    </location>
</feature>
<feature type="compositionally biased region" description="Polar residues" evidence="3">
    <location>
        <begin position="371"/>
        <end position="385"/>
    </location>
</feature>
<feature type="compositionally biased region" description="Polar residues" evidence="3">
    <location>
        <begin position="399"/>
        <end position="409"/>
    </location>
</feature>
<feature type="compositionally biased region" description="Polar residues" evidence="3">
    <location>
        <begin position="443"/>
        <end position="452"/>
    </location>
</feature>
<feature type="compositionally biased region" description="Polar residues" evidence="3">
    <location>
        <begin position="498"/>
        <end position="511"/>
    </location>
</feature>
<feature type="compositionally biased region" description="Low complexity" evidence="3">
    <location>
        <begin position="522"/>
        <end position="561"/>
    </location>
</feature>
<feature type="compositionally biased region" description="Pro residues" evidence="3">
    <location>
        <begin position="587"/>
        <end position="596"/>
    </location>
</feature>
<feature type="compositionally biased region" description="Pro residues" evidence="3">
    <location>
        <begin position="602"/>
        <end position="611"/>
    </location>
</feature>
<feature type="compositionally biased region" description="Low complexity" evidence="3">
    <location>
        <begin position="612"/>
        <end position="622"/>
    </location>
</feature>
<keyword id="KW-1185">Reference proteome</keyword>
<keyword id="KW-0677">Repeat</keyword>
<keyword id="KW-0728">SH3 domain</keyword>
<organism>
    <name type="scientific">Schizosaccharomyces pombe (strain 972 / ATCC 24843)</name>
    <name type="common">Fission yeast</name>
    <dbReference type="NCBI Taxonomy" id="284812"/>
    <lineage>
        <taxon>Eukaryota</taxon>
        <taxon>Fungi</taxon>
        <taxon>Dikarya</taxon>
        <taxon>Ascomycota</taxon>
        <taxon>Taphrinomycotina</taxon>
        <taxon>Schizosaccharomycetes</taxon>
        <taxon>Schizosaccharomycetales</taxon>
        <taxon>Schizosaccharomycetaceae</taxon>
        <taxon>Schizosaccharomyces</taxon>
    </lineage>
</organism>
<proteinExistence type="evidence at transcript level"/>
<reference key="1">
    <citation type="journal article" date="2002" name="Nature">
        <title>The genome sequence of Schizosaccharomyces pombe.</title>
        <authorList>
            <person name="Wood V."/>
            <person name="Gwilliam R."/>
            <person name="Rajandream M.A."/>
            <person name="Lyne M.H."/>
            <person name="Lyne R."/>
            <person name="Stewart A."/>
            <person name="Sgouros J.G."/>
            <person name="Peat N."/>
            <person name="Hayles J."/>
            <person name="Baker S.G."/>
            <person name="Basham D."/>
            <person name="Bowman S."/>
            <person name="Brooks K."/>
            <person name="Brown D."/>
            <person name="Brown S."/>
            <person name="Chillingworth T."/>
            <person name="Churcher C.M."/>
            <person name="Collins M."/>
            <person name="Connor R."/>
            <person name="Cronin A."/>
            <person name="Davis P."/>
            <person name="Feltwell T."/>
            <person name="Fraser A."/>
            <person name="Gentles S."/>
            <person name="Goble A."/>
            <person name="Hamlin N."/>
            <person name="Harris D.E."/>
            <person name="Hidalgo J."/>
            <person name="Hodgson G."/>
            <person name="Holroyd S."/>
            <person name="Hornsby T."/>
            <person name="Howarth S."/>
            <person name="Huckle E.J."/>
            <person name="Hunt S."/>
            <person name="Jagels K."/>
            <person name="James K.D."/>
            <person name="Jones L."/>
            <person name="Jones M."/>
            <person name="Leather S."/>
            <person name="McDonald S."/>
            <person name="McLean J."/>
            <person name="Mooney P."/>
            <person name="Moule S."/>
            <person name="Mungall K.L."/>
            <person name="Murphy L.D."/>
            <person name="Niblett D."/>
            <person name="Odell C."/>
            <person name="Oliver K."/>
            <person name="O'Neil S."/>
            <person name="Pearson D."/>
            <person name="Quail M.A."/>
            <person name="Rabbinowitsch E."/>
            <person name="Rutherford K.M."/>
            <person name="Rutter S."/>
            <person name="Saunders D."/>
            <person name="Seeger K."/>
            <person name="Sharp S."/>
            <person name="Skelton J."/>
            <person name="Simmonds M.N."/>
            <person name="Squares R."/>
            <person name="Squares S."/>
            <person name="Stevens K."/>
            <person name="Taylor K."/>
            <person name="Taylor R.G."/>
            <person name="Tivey A."/>
            <person name="Walsh S.V."/>
            <person name="Warren T."/>
            <person name="Whitehead S."/>
            <person name="Woodward J.R."/>
            <person name="Volckaert G."/>
            <person name="Aert R."/>
            <person name="Robben J."/>
            <person name="Grymonprez B."/>
            <person name="Weltjens I."/>
            <person name="Vanstreels E."/>
            <person name="Rieger M."/>
            <person name="Schaefer M."/>
            <person name="Mueller-Auer S."/>
            <person name="Gabel C."/>
            <person name="Fuchs M."/>
            <person name="Duesterhoeft A."/>
            <person name="Fritzc C."/>
            <person name="Holzer E."/>
            <person name="Moestl D."/>
            <person name="Hilbert H."/>
            <person name="Borzym K."/>
            <person name="Langer I."/>
            <person name="Beck A."/>
            <person name="Lehrach H."/>
            <person name="Reinhardt R."/>
            <person name="Pohl T.M."/>
            <person name="Eger P."/>
            <person name="Zimmermann W."/>
            <person name="Wedler H."/>
            <person name="Wambutt R."/>
            <person name="Purnelle B."/>
            <person name="Goffeau A."/>
            <person name="Cadieu E."/>
            <person name="Dreano S."/>
            <person name="Gloux S."/>
            <person name="Lelaure V."/>
            <person name="Mottier S."/>
            <person name="Galibert F."/>
            <person name="Aves S.J."/>
            <person name="Xiang Z."/>
            <person name="Hunt C."/>
            <person name="Moore K."/>
            <person name="Hurst S.M."/>
            <person name="Lucas M."/>
            <person name="Rochet M."/>
            <person name="Gaillardin C."/>
            <person name="Tallada V.A."/>
            <person name="Garzon A."/>
            <person name="Thode G."/>
            <person name="Daga R.R."/>
            <person name="Cruzado L."/>
            <person name="Jimenez J."/>
            <person name="Sanchez M."/>
            <person name="del Rey F."/>
            <person name="Benito J."/>
            <person name="Dominguez A."/>
            <person name="Revuelta J.L."/>
            <person name="Moreno S."/>
            <person name="Armstrong J."/>
            <person name="Forsburg S.L."/>
            <person name="Cerutti L."/>
            <person name="Lowe T."/>
            <person name="McCombie W.R."/>
            <person name="Paulsen I."/>
            <person name="Potashkin J."/>
            <person name="Shpakovski G.V."/>
            <person name="Ussery D."/>
            <person name="Barrell B.G."/>
            <person name="Nurse P."/>
        </authorList>
    </citation>
    <scope>NUCLEOTIDE SEQUENCE [LARGE SCALE GENOMIC DNA]</scope>
    <source>
        <strain>972 / ATCC 24843</strain>
    </source>
</reference>
<reference key="2">
    <citation type="journal article" date="1997" name="DNA Res.">
        <title>Identification of open reading frames in Schizosaccharomyces pombe cDNAs.</title>
        <authorList>
            <person name="Yoshioka S."/>
            <person name="Kato K."/>
            <person name="Nakai K."/>
            <person name="Okayama H."/>
            <person name="Nojima H."/>
        </authorList>
    </citation>
    <scope>NUCLEOTIDE SEQUENCE [LARGE SCALE MRNA] OF 560-857</scope>
    <source>
        <strain>PR745</strain>
    </source>
</reference>
<accession>Q9P7E8</accession>
<accession>P78815</accession>
<protein>
    <recommendedName>
        <fullName>Protein app1</fullName>
    </recommendedName>
</protein>
<sequence length="857" mass="91138">MSFQLDTSTHGAEIRNVYEKVLSGADDCSWAIFGYEKGQGNILKVVASGNDNDEFLDEFDENAVLFGFLRVKDVNTGLNKFVLVCWCGEAAARKGLFSIHMATVSNLLKGYHVQITGRESSDLNMDDIIRRVADASGSKYSVHTSNSTPQSKHNAFYDASQTFGSTAKVAPAPAPSTKTPLANISKPVVQAQKDSKDNSWDDSSKQSNTQTANTTSNLRVPVNASWSDAGRKEKSQENKPKPTPFGSGGPSKPTPFESHGPAKQISVQPSEHPKPSISTTTTGSSYRSAESSHAPTTPDHFKLTPLTKLEPQPPSGSPSKKPVSELEELHTAGNVNLSARRALFEKKESSTKNVENPVSHHLKSPVRTSFPPASTTASKQDSPSTVPVDKQETAKPINKQVSSNETSAQEEPRESVAALRARFAKANVSENNDPPTFPKTAAKISSFNSKAGTSFAKPRPFTNNPNPISAPEKPTSGESLSLNPPPAMPKVFPERDISSASQKAAQPSVITPSVPQPPAAPVVPEAPSVHQPPAAPVAPEVPSAPQRPAAPVVPEAPSVPQRPAVPVVPEALSVPQPPVAPVAPEVPSVPQPPVAPVVPEAPSVPQPPVAPVAPEVPSVPQRPAVPVVPEAPSVPQPPAAPVVPEVPSVPQRPAVPVVPEAPSVPQPPAAPVVPEVPSVPQPPAVPVVPEAGQLNEPVVPPLPPHDETQEPQVGGDVKATEHTQPTKTPAIVIYDYSPEEENEIELVENEQIQILEFVDDGWWLGENSKGQQGLFPSNYVEITGPNETANNPPAEPQAGGPGKSVKAIYDYQAQEDNELSFFEDEIIANVDCVDPNWWEGECHGHRGLFPSNYVEEI</sequence>
<name>APP1_SCHPO</name>
<gene>
    <name type="primary">app1</name>
    <name type="ORF">SPAPJ760.02c</name>
</gene>
<evidence type="ECO:0000255" key="1">
    <source>
        <dbReference type="PROSITE-ProRule" id="PRU00192"/>
    </source>
</evidence>
<evidence type="ECO:0000255" key="2">
    <source>
        <dbReference type="PROSITE-ProRule" id="PRU00599"/>
    </source>
</evidence>
<evidence type="ECO:0000256" key="3">
    <source>
        <dbReference type="SAM" id="MobiDB-lite"/>
    </source>
</evidence>